<organism>
    <name type="scientific">Homo sapiens</name>
    <name type="common">Human</name>
    <dbReference type="NCBI Taxonomy" id="9606"/>
    <lineage>
        <taxon>Eukaryota</taxon>
        <taxon>Metazoa</taxon>
        <taxon>Chordata</taxon>
        <taxon>Craniata</taxon>
        <taxon>Vertebrata</taxon>
        <taxon>Euteleostomi</taxon>
        <taxon>Mammalia</taxon>
        <taxon>Eutheria</taxon>
        <taxon>Euarchontoglires</taxon>
        <taxon>Primates</taxon>
        <taxon>Haplorrhini</taxon>
        <taxon>Catarrhini</taxon>
        <taxon>Hominidae</taxon>
        <taxon>Homo</taxon>
    </lineage>
</organism>
<comment type="function">
    <text evidence="3 5 6 7 13 14">Catalyzes the three-step monooxygenation required for the demethylation of 4,4-dimethyl and 4alpha-methylsterols, which can be subsequently metabolized to cholesterol (PubMed:21285510, PubMed:23583456, PubMed:26114596, PubMed:28673550, PubMed:36958722). Also involved in drug metabolism, as it can metabolize eldecalcitol (ED-71 or 1alpha,25-dihydroxy-2beta-(3-hydroxypropoxy)-cholecalciferol), a second-generation vitamin D analog, into 1alpha,2beta,25-trihydroxy vitamin D3; this reaction occurs via enzymatic hydroxylation and spontaneous O-dehydroxypropylation (PubMed:26038696).</text>
</comment>
<comment type="catalytic activity">
    <reaction evidence="1">
        <text>4,4-dimethyl-5alpha-cholest-7-en-3beta-ol + 6 Fe(II)-[cytochrome b5] + 3 O2 + 5 H(+) = 4alpha-carboxy-4beta-methyl-5alpha-cholest-7-ene-3beta-ol + 6 Fe(III)-[cytochrome b5] + 4 H2O</text>
        <dbReference type="Rhea" id="RHEA:55220"/>
        <dbReference type="Rhea" id="RHEA-COMP:10438"/>
        <dbReference type="Rhea" id="RHEA-COMP:10439"/>
        <dbReference type="ChEBI" id="CHEBI:15377"/>
        <dbReference type="ChEBI" id="CHEBI:15378"/>
        <dbReference type="ChEBI" id="CHEBI:15379"/>
        <dbReference type="ChEBI" id="CHEBI:16455"/>
        <dbReference type="ChEBI" id="CHEBI:29033"/>
        <dbReference type="ChEBI" id="CHEBI:29034"/>
        <dbReference type="ChEBI" id="CHEBI:58387"/>
        <dbReference type="EC" id="1.14.18.9"/>
    </reaction>
    <physiologicalReaction direction="left-to-right" evidence="1">
        <dbReference type="Rhea" id="RHEA:55221"/>
    </physiologicalReaction>
</comment>
<comment type="catalytic activity">
    <reaction evidence="3 6 14">
        <text>4,4-dimethyl-5alpha-cholesta-8,24-dien-3beta-ol + 6 Fe(II)-[cytochrome b5] + 3 O2 + 5 H(+) = 4beta-methylzymosterol-4alpha-carboxylate + 6 Fe(III)-[cytochrome b5] + 4 H2O</text>
        <dbReference type="Rhea" id="RHEA:55244"/>
        <dbReference type="Rhea" id="RHEA-COMP:10438"/>
        <dbReference type="Rhea" id="RHEA-COMP:10439"/>
        <dbReference type="ChEBI" id="CHEBI:15377"/>
        <dbReference type="ChEBI" id="CHEBI:15378"/>
        <dbReference type="ChEBI" id="CHEBI:15379"/>
        <dbReference type="ChEBI" id="CHEBI:18364"/>
        <dbReference type="ChEBI" id="CHEBI:29033"/>
        <dbReference type="ChEBI" id="CHEBI:29034"/>
        <dbReference type="ChEBI" id="CHEBI:64925"/>
    </reaction>
    <physiologicalReaction direction="left-to-right" evidence="3 6 14">
        <dbReference type="Rhea" id="RHEA:55245"/>
    </physiologicalReaction>
</comment>
<comment type="catalytic activity">
    <reaction evidence="12 14 15">
        <text>4alpha-methylzymosterol + 6 Fe(II)-[cytochrome b5] + 3 O2 + 5 H(+) = 4alpha-carboxyzymosterol + 6 Fe(III)-[cytochrome b5] + 4 H2O</text>
        <dbReference type="Rhea" id="RHEA:47056"/>
        <dbReference type="Rhea" id="RHEA-COMP:10438"/>
        <dbReference type="Rhea" id="RHEA-COMP:10439"/>
        <dbReference type="ChEBI" id="CHEBI:1949"/>
        <dbReference type="ChEBI" id="CHEBI:15377"/>
        <dbReference type="ChEBI" id="CHEBI:15378"/>
        <dbReference type="ChEBI" id="CHEBI:15379"/>
        <dbReference type="ChEBI" id="CHEBI:29033"/>
        <dbReference type="ChEBI" id="CHEBI:29034"/>
        <dbReference type="ChEBI" id="CHEBI:143575"/>
    </reaction>
    <physiologicalReaction direction="left-to-right" evidence="12 14 15">
        <dbReference type="Rhea" id="RHEA:47057"/>
    </physiologicalReaction>
</comment>
<comment type="catalytic activity">
    <reaction evidence="3 6">
        <text>4alpha-methyl-5alpha-cholest-7-en-3beta-ol + 6 Fe(II)-[cytochrome b5] + 3 O2 + 5 H(+) = 4alpha-carboxy-5alpha-cholest-7-en-3beta-ol + 6 Fe(III)-[cytochrome b5] + 4 H2O</text>
        <dbReference type="Rhea" id="RHEA:62768"/>
        <dbReference type="Rhea" id="RHEA-COMP:10438"/>
        <dbReference type="Rhea" id="RHEA-COMP:10439"/>
        <dbReference type="ChEBI" id="CHEBI:15377"/>
        <dbReference type="ChEBI" id="CHEBI:15378"/>
        <dbReference type="ChEBI" id="CHEBI:15379"/>
        <dbReference type="ChEBI" id="CHEBI:18378"/>
        <dbReference type="ChEBI" id="CHEBI:29033"/>
        <dbReference type="ChEBI" id="CHEBI:29034"/>
        <dbReference type="ChEBI" id="CHEBI:145943"/>
    </reaction>
    <physiologicalReaction direction="left-to-right" evidence="3 6">
        <dbReference type="Rhea" id="RHEA:62769"/>
    </physiologicalReaction>
</comment>
<comment type="catalytic activity">
    <reaction evidence="3 6">
        <text>4,4-dimethyl-5alpha-cholest-8-en-3beta-ol + 6 Fe(II)-[cytochrome b5] + 3 O2 + 5 H(+) = 4alpha-carboxy-4beta-methyl-5alpha-cholest-8-en-3beta-ol + 6 Fe(III)-[cytochrome b5] + 4 H2O</text>
        <dbReference type="Rhea" id="RHEA:62776"/>
        <dbReference type="Rhea" id="RHEA-COMP:10438"/>
        <dbReference type="Rhea" id="RHEA-COMP:10439"/>
        <dbReference type="ChEBI" id="CHEBI:15377"/>
        <dbReference type="ChEBI" id="CHEBI:15378"/>
        <dbReference type="ChEBI" id="CHEBI:15379"/>
        <dbReference type="ChEBI" id="CHEBI:29033"/>
        <dbReference type="ChEBI" id="CHEBI:29034"/>
        <dbReference type="ChEBI" id="CHEBI:87044"/>
        <dbReference type="ChEBI" id="CHEBI:87047"/>
    </reaction>
    <physiologicalReaction direction="left-to-right" evidence="3 6">
        <dbReference type="Rhea" id="RHEA:62777"/>
    </physiologicalReaction>
</comment>
<comment type="catalytic activity">
    <reaction evidence="3 6">
        <text>4alpha-methyl-5alpha-cholest-8-en-3beta-ol + 6 Fe(II)-[cytochrome b5] + 3 O2 + 5 H(+) = 4alpha-carboxy-5alpha-cholest-8-ene-3beta-ol + 6 Fe(III)-[cytochrome b5] + 4 H2O</text>
        <dbReference type="Rhea" id="RHEA:62780"/>
        <dbReference type="Rhea" id="RHEA-COMP:10438"/>
        <dbReference type="Rhea" id="RHEA-COMP:10439"/>
        <dbReference type="ChEBI" id="CHEBI:15377"/>
        <dbReference type="ChEBI" id="CHEBI:15378"/>
        <dbReference type="ChEBI" id="CHEBI:15379"/>
        <dbReference type="ChEBI" id="CHEBI:29033"/>
        <dbReference type="ChEBI" id="CHEBI:29034"/>
        <dbReference type="ChEBI" id="CHEBI:87051"/>
        <dbReference type="ChEBI" id="CHEBI:87055"/>
    </reaction>
    <physiologicalReaction direction="left-to-right" evidence="3 6">
        <dbReference type="Rhea" id="RHEA:62781"/>
    </physiologicalReaction>
</comment>
<comment type="catalytic activity">
    <reaction evidence="5">
        <text>1alpha,25-dihydroxy-2beta-(3-hydroxypropoxy)-cholecalciferol + 2 Fe(II)-[cytochrome b5] + O2 + 2 H(+) = 1alpha,25-dihydroxy-2beta-(1,3-dihydroxypropoxy)-cholecalciferol + 2 Fe(III)-[cytochrome b5] + H2O</text>
        <dbReference type="Rhea" id="RHEA:62820"/>
        <dbReference type="Rhea" id="RHEA-COMP:10438"/>
        <dbReference type="Rhea" id="RHEA-COMP:10439"/>
        <dbReference type="ChEBI" id="CHEBI:15377"/>
        <dbReference type="ChEBI" id="CHEBI:15378"/>
        <dbReference type="ChEBI" id="CHEBI:15379"/>
        <dbReference type="ChEBI" id="CHEBI:29033"/>
        <dbReference type="ChEBI" id="CHEBI:29034"/>
        <dbReference type="ChEBI" id="CHEBI:73927"/>
        <dbReference type="ChEBI" id="CHEBI:146141"/>
    </reaction>
    <physiologicalReaction direction="left-to-right" evidence="5">
        <dbReference type="Rhea" id="RHEA:62821"/>
    </physiologicalReaction>
</comment>
<comment type="cofactor">
    <cofactor evidence="16">
        <name>Fe cation</name>
        <dbReference type="ChEBI" id="CHEBI:24875"/>
    </cofactor>
</comment>
<comment type="biophysicochemical properties">
    <kinetics>
        <KM evidence="5">19.5 uM for 1alpha,25-dihydroxy-2beta-(3-hydroxypropoxy)-cholecalciferol</KM>
        <Vmax evidence="5">19.0 pmol/min/mg enzyme with 1alpha,25-dihydroxy-2beta-(3-hydroxypropoxy)-cholecalciferol as substrate</Vmax>
    </kinetics>
</comment>
<comment type="pathway">
    <text evidence="13 14">Steroid biosynthesis; zymosterol biosynthesis; zymosterol from lanosterol: step 3/6.</text>
</comment>
<comment type="pathway">
    <text evidence="12 13 14 15">Steroid biosynthesis; cholesterol biosynthesis.</text>
</comment>
<comment type="interaction">
    <interactant intactId="EBI-949102">
        <id>Q15800</id>
    </interactant>
    <interactant intactId="EBI-17509525">
        <id>Q6NT55</id>
        <label>CYP4F22</label>
    </interactant>
    <organismsDiffer>false</organismsDiffer>
    <experiments>3</experiments>
</comment>
<comment type="interaction">
    <interactant intactId="EBI-949102">
        <id>Q15800</id>
    </interactant>
    <interactant intactId="EBI-8639143">
        <id>Q96LL9</id>
        <label>DNAJC30</label>
    </interactant>
    <organismsDiffer>false</organismsDiffer>
    <experiments>3</experiments>
</comment>
<comment type="interaction">
    <interactant intactId="EBI-949102">
        <id>Q15800</id>
    </interactant>
    <interactant intactId="EBI-711490">
        <id>Q9UKR5</id>
        <label>ERG28</label>
    </interactant>
    <organismsDiffer>false</organismsDiffer>
    <experiments>3</experiments>
</comment>
<comment type="interaction">
    <interactant intactId="EBI-949102">
        <id>Q15800</id>
    </interactant>
    <interactant intactId="EBI-17231387">
        <id>Q6ZVE7</id>
        <label>GOLT1A</label>
    </interactant>
    <organismsDiffer>false</organismsDiffer>
    <experiments>3</experiments>
</comment>
<comment type="interaction">
    <interactant intactId="EBI-949102">
        <id>Q15800</id>
    </interactant>
    <interactant intactId="EBI-2806151">
        <id>P09601</id>
        <label>HMOX1</label>
    </interactant>
    <organismsDiffer>false</organismsDiffer>
    <experiments>3</experiments>
</comment>
<comment type="interaction">
    <interactant intactId="EBI-949102">
        <id>Q15800</id>
    </interactant>
    <interactant intactId="EBI-992788">
        <id>P50281</id>
        <label>MMP14</label>
    </interactant>
    <organismsDiffer>false</organismsDiffer>
    <experiments>3</experiments>
</comment>
<comment type="interaction">
    <interactant intactId="EBI-949102">
        <id>Q15800</id>
    </interactant>
    <interactant intactId="EBI-12200293">
        <id>P0DN84</id>
        <label>STRIT1</label>
    </interactant>
    <organismsDiffer>false</organismsDiffer>
    <experiments>3</experiments>
</comment>
<comment type="interaction">
    <interactant intactId="EBI-949102">
        <id>Q15800</id>
    </interactant>
    <interactant intactId="EBI-1394295">
        <id>Q13277</id>
        <label>STX3</label>
    </interactant>
    <organismsDiffer>false</organismsDiffer>
    <experiments>3</experiments>
</comment>
<comment type="interaction">
    <interactant intactId="EBI-949102">
        <id>Q15800</id>
    </interactant>
    <interactant intactId="EBI-723946">
        <id>P17152</id>
        <label>TMEM11</label>
    </interactant>
    <organismsDiffer>false</organismsDiffer>
    <experiments>3</experiments>
</comment>
<comment type="interaction">
    <interactant intactId="EBI-949102">
        <id>Q15800</id>
    </interactant>
    <interactant intactId="EBI-2844246">
        <id>Q9NV12</id>
        <label>TMEM140</label>
    </interactant>
    <organismsDiffer>false</organismsDiffer>
    <experiments>3</experiments>
</comment>
<comment type="interaction">
    <interactant intactId="EBI-949102">
        <id>Q15800</id>
    </interactant>
    <interactant intactId="EBI-10315004">
        <id>Q9NWH2</id>
        <label>TMEM242</label>
    </interactant>
    <organismsDiffer>false</organismsDiffer>
    <experiments>3</experiments>
</comment>
<comment type="interaction">
    <interactant intactId="EBI-949102">
        <id>Q15800</id>
    </interactant>
    <interactant intactId="EBI-6656213">
        <id>Q6PI78</id>
        <label>TMEM65</label>
    </interactant>
    <organismsDiffer>false</organismsDiffer>
    <experiments>3</experiments>
</comment>
<comment type="interaction">
    <interactant intactId="EBI-949102">
        <id>Q15800</id>
    </interactant>
    <interactant intactId="EBI-2548832">
        <id>Q8N661</id>
        <label>TMEM86B</label>
    </interactant>
    <organismsDiffer>false</organismsDiffer>
    <experiments>3</experiments>
</comment>
<comment type="interaction">
    <interactant intactId="EBI-949102">
        <id>Q15800</id>
    </interactant>
    <interactant intactId="EBI-2799703">
        <id>O95070</id>
        <label>YIF1A</label>
    </interactant>
    <organismsDiffer>false</organismsDiffer>
    <experiments>3</experiments>
</comment>
<comment type="subcellular location">
    <subcellularLocation>
        <location evidence="11">Endoplasmic reticulum membrane</location>
        <topology evidence="11">Multi-pass membrane protein</topology>
    </subcellularLocation>
</comment>
<comment type="alternative products">
    <event type="alternative splicing"/>
    <isoform>
        <id>Q15800-1</id>
        <name>1</name>
        <sequence type="displayed"/>
    </isoform>
    <isoform>
        <id>Q15800-2</id>
        <name>2</name>
        <sequence type="described" ref="VSP_044585"/>
    </isoform>
</comment>
<comment type="domain">
    <text>The histidine box domains may contain the active site and/or be involved in metal ion binding.</text>
</comment>
<comment type="PTM">
    <text evidence="7">Ubiquitinated by MARCHF6, leading to proteasomal degradation.</text>
</comment>
<comment type="disease" evidence="3 4">
    <disease id="DI-04663">
        <name>Microcephaly, congenital cataract, and psoriasiform dermatitis</name>
        <acronym>MCCPD</acronym>
        <description>An autosomal recessive inborn error of cholesterol metabolism characterized by accumulation of a large amount of methylsterols, particularly dimethylsterols, in affected individuals. Patients manifest psoriasiform dermatitis, arthralgias, congenital cataracts, microcephaly, and developmental delay.</description>
        <dbReference type="MIM" id="616834"/>
    </disease>
    <text>The disease is caused by variants affecting the gene represented in this entry.</text>
</comment>
<comment type="similarity">
    <text evidence="11">Belongs to the sterol desaturase family.</text>
</comment>
<protein>
    <recommendedName>
        <fullName evidence="10">Methylsterol monooxygenase 1</fullName>
        <ecNumber evidence="1">1.14.18.9</ecNumber>
    </recommendedName>
    <alternativeName>
        <fullName evidence="10">C-4 methylsterol oxidase</fullName>
    </alternativeName>
    <alternativeName>
        <fullName evidence="9">Sterol-C4-methyl oxidase</fullName>
    </alternativeName>
</protein>
<evidence type="ECO:0000250" key="1">
    <source>
        <dbReference type="UniProtKB" id="O35532"/>
    </source>
</evidence>
<evidence type="ECO:0000255" key="2"/>
<evidence type="ECO:0000269" key="3">
    <source>
    </source>
</evidence>
<evidence type="ECO:0000269" key="4">
    <source>
    </source>
</evidence>
<evidence type="ECO:0000269" key="5">
    <source>
    </source>
</evidence>
<evidence type="ECO:0000269" key="6">
    <source>
    </source>
</evidence>
<evidence type="ECO:0000269" key="7">
    <source>
    </source>
</evidence>
<evidence type="ECO:0000303" key="8">
    <source>
    </source>
</evidence>
<evidence type="ECO:0000303" key="9">
    <source>
    </source>
</evidence>
<evidence type="ECO:0000303" key="10">
    <source>
    </source>
</evidence>
<evidence type="ECO:0000305" key="11"/>
<evidence type="ECO:0000305" key="12">
    <source>
    </source>
</evidence>
<evidence type="ECO:0000305" key="13">
    <source>
    </source>
</evidence>
<evidence type="ECO:0000305" key="14">
    <source>
    </source>
</evidence>
<evidence type="ECO:0000305" key="15">
    <source>
    </source>
</evidence>
<evidence type="ECO:0000305" key="16">
    <source>
    </source>
</evidence>
<reference key="1">
    <citation type="journal article" date="1996" name="J. Biol. Chem.">
        <title>Characterization of yeast methyl sterol oxidase (ERG25) and identification of a human homologue.</title>
        <authorList>
            <person name="Li L."/>
            <person name="Kaplan J."/>
        </authorList>
    </citation>
    <scope>NUCLEOTIDE SEQUENCE [MRNA] (ISOFORM 1)</scope>
    <scope>COFACTOR</scope>
    <source>
        <tissue>Intestine</tissue>
    </source>
</reference>
<reference key="2">
    <citation type="submission" date="1997-03" db="EMBL/GenBank/DDBJ databases">
        <authorList>
            <person name="Herrmann K."/>
        </authorList>
    </citation>
    <scope>NUCLEOTIDE SEQUENCE [MRNA] (ISOFORM 1)</scope>
    <source>
        <tissue>Retina</tissue>
    </source>
</reference>
<reference key="3">
    <citation type="journal article" date="2004" name="Nat. Genet.">
        <title>Complete sequencing and characterization of 21,243 full-length human cDNAs.</title>
        <authorList>
            <person name="Ota T."/>
            <person name="Suzuki Y."/>
            <person name="Nishikawa T."/>
            <person name="Otsuki T."/>
            <person name="Sugiyama T."/>
            <person name="Irie R."/>
            <person name="Wakamatsu A."/>
            <person name="Hayashi K."/>
            <person name="Sato H."/>
            <person name="Nagai K."/>
            <person name="Kimura K."/>
            <person name="Makita H."/>
            <person name="Sekine M."/>
            <person name="Obayashi M."/>
            <person name="Nishi T."/>
            <person name="Shibahara T."/>
            <person name="Tanaka T."/>
            <person name="Ishii S."/>
            <person name="Yamamoto J."/>
            <person name="Saito K."/>
            <person name="Kawai Y."/>
            <person name="Isono Y."/>
            <person name="Nakamura Y."/>
            <person name="Nagahari K."/>
            <person name="Murakami K."/>
            <person name="Yasuda T."/>
            <person name="Iwayanagi T."/>
            <person name="Wagatsuma M."/>
            <person name="Shiratori A."/>
            <person name="Sudo H."/>
            <person name="Hosoiri T."/>
            <person name="Kaku Y."/>
            <person name="Kodaira H."/>
            <person name="Kondo H."/>
            <person name="Sugawara M."/>
            <person name="Takahashi M."/>
            <person name="Kanda K."/>
            <person name="Yokoi T."/>
            <person name="Furuya T."/>
            <person name="Kikkawa E."/>
            <person name="Omura Y."/>
            <person name="Abe K."/>
            <person name="Kamihara K."/>
            <person name="Katsuta N."/>
            <person name="Sato K."/>
            <person name="Tanikawa M."/>
            <person name="Yamazaki M."/>
            <person name="Ninomiya K."/>
            <person name="Ishibashi T."/>
            <person name="Yamashita H."/>
            <person name="Murakawa K."/>
            <person name="Fujimori K."/>
            <person name="Tanai H."/>
            <person name="Kimata M."/>
            <person name="Watanabe M."/>
            <person name="Hiraoka S."/>
            <person name="Chiba Y."/>
            <person name="Ishida S."/>
            <person name="Ono Y."/>
            <person name="Takiguchi S."/>
            <person name="Watanabe S."/>
            <person name="Yosida M."/>
            <person name="Hotuta T."/>
            <person name="Kusano J."/>
            <person name="Kanehori K."/>
            <person name="Takahashi-Fujii A."/>
            <person name="Hara H."/>
            <person name="Tanase T.-O."/>
            <person name="Nomura Y."/>
            <person name="Togiya S."/>
            <person name="Komai F."/>
            <person name="Hara R."/>
            <person name="Takeuchi K."/>
            <person name="Arita M."/>
            <person name="Imose N."/>
            <person name="Musashino K."/>
            <person name="Yuuki H."/>
            <person name="Oshima A."/>
            <person name="Sasaki N."/>
            <person name="Aotsuka S."/>
            <person name="Yoshikawa Y."/>
            <person name="Matsunawa H."/>
            <person name="Ichihara T."/>
            <person name="Shiohata N."/>
            <person name="Sano S."/>
            <person name="Moriya S."/>
            <person name="Momiyama H."/>
            <person name="Satoh N."/>
            <person name="Takami S."/>
            <person name="Terashima Y."/>
            <person name="Suzuki O."/>
            <person name="Nakagawa S."/>
            <person name="Senoh A."/>
            <person name="Mizoguchi H."/>
            <person name="Goto Y."/>
            <person name="Shimizu F."/>
            <person name="Wakebe H."/>
            <person name="Hishigaki H."/>
            <person name="Watanabe T."/>
            <person name="Sugiyama A."/>
            <person name="Takemoto M."/>
            <person name="Kawakami B."/>
            <person name="Yamazaki M."/>
            <person name="Watanabe K."/>
            <person name="Kumagai A."/>
            <person name="Itakura S."/>
            <person name="Fukuzumi Y."/>
            <person name="Fujimori Y."/>
            <person name="Komiyama M."/>
            <person name="Tashiro H."/>
            <person name="Tanigami A."/>
            <person name="Fujiwara T."/>
            <person name="Ono T."/>
            <person name="Yamada K."/>
            <person name="Fujii Y."/>
            <person name="Ozaki K."/>
            <person name="Hirao M."/>
            <person name="Ohmori Y."/>
            <person name="Kawabata A."/>
            <person name="Hikiji T."/>
            <person name="Kobatake N."/>
            <person name="Inagaki H."/>
            <person name="Ikema Y."/>
            <person name="Okamoto S."/>
            <person name="Okitani R."/>
            <person name="Kawakami T."/>
            <person name="Noguchi S."/>
            <person name="Itoh T."/>
            <person name="Shigeta K."/>
            <person name="Senba T."/>
            <person name="Matsumura K."/>
            <person name="Nakajima Y."/>
            <person name="Mizuno T."/>
            <person name="Morinaga M."/>
            <person name="Sasaki M."/>
            <person name="Togashi T."/>
            <person name="Oyama M."/>
            <person name="Hata H."/>
            <person name="Watanabe M."/>
            <person name="Komatsu T."/>
            <person name="Mizushima-Sugano J."/>
            <person name="Satoh T."/>
            <person name="Shirai Y."/>
            <person name="Takahashi Y."/>
            <person name="Nakagawa K."/>
            <person name="Okumura K."/>
            <person name="Nagase T."/>
            <person name="Nomura N."/>
            <person name="Kikuchi H."/>
            <person name="Masuho Y."/>
            <person name="Yamashita R."/>
            <person name="Nakai K."/>
            <person name="Yada T."/>
            <person name="Nakamura Y."/>
            <person name="Ohara O."/>
            <person name="Isogai T."/>
            <person name="Sugano S."/>
        </authorList>
    </citation>
    <scope>NUCLEOTIDE SEQUENCE [LARGE SCALE MRNA] (ISOFORMS 1 AND 2)</scope>
    <source>
        <tissue>Corpus callosum</tissue>
        <tissue>Testis</tissue>
    </source>
</reference>
<reference key="4">
    <citation type="journal article" date="2005" name="Nature">
        <title>Generation and annotation of the DNA sequences of human chromosomes 2 and 4.</title>
        <authorList>
            <person name="Hillier L.W."/>
            <person name="Graves T.A."/>
            <person name="Fulton R.S."/>
            <person name="Fulton L.A."/>
            <person name="Pepin K.H."/>
            <person name="Minx P."/>
            <person name="Wagner-McPherson C."/>
            <person name="Layman D."/>
            <person name="Wylie K."/>
            <person name="Sekhon M."/>
            <person name="Becker M.C."/>
            <person name="Fewell G.A."/>
            <person name="Delehaunty K.D."/>
            <person name="Miner T.L."/>
            <person name="Nash W.E."/>
            <person name="Kremitzki C."/>
            <person name="Oddy L."/>
            <person name="Du H."/>
            <person name="Sun H."/>
            <person name="Bradshaw-Cordum H."/>
            <person name="Ali J."/>
            <person name="Carter J."/>
            <person name="Cordes M."/>
            <person name="Harris A."/>
            <person name="Isak A."/>
            <person name="van Brunt A."/>
            <person name="Nguyen C."/>
            <person name="Du F."/>
            <person name="Courtney L."/>
            <person name="Kalicki J."/>
            <person name="Ozersky P."/>
            <person name="Abbott S."/>
            <person name="Armstrong J."/>
            <person name="Belter E.A."/>
            <person name="Caruso L."/>
            <person name="Cedroni M."/>
            <person name="Cotton M."/>
            <person name="Davidson T."/>
            <person name="Desai A."/>
            <person name="Elliott G."/>
            <person name="Erb T."/>
            <person name="Fronick C."/>
            <person name="Gaige T."/>
            <person name="Haakenson W."/>
            <person name="Haglund K."/>
            <person name="Holmes A."/>
            <person name="Harkins R."/>
            <person name="Kim K."/>
            <person name="Kruchowski S.S."/>
            <person name="Strong C.M."/>
            <person name="Grewal N."/>
            <person name="Goyea E."/>
            <person name="Hou S."/>
            <person name="Levy A."/>
            <person name="Martinka S."/>
            <person name="Mead K."/>
            <person name="McLellan M.D."/>
            <person name="Meyer R."/>
            <person name="Randall-Maher J."/>
            <person name="Tomlinson C."/>
            <person name="Dauphin-Kohlberg S."/>
            <person name="Kozlowicz-Reilly A."/>
            <person name="Shah N."/>
            <person name="Swearengen-Shahid S."/>
            <person name="Snider J."/>
            <person name="Strong J.T."/>
            <person name="Thompson J."/>
            <person name="Yoakum M."/>
            <person name="Leonard S."/>
            <person name="Pearman C."/>
            <person name="Trani L."/>
            <person name="Radionenko M."/>
            <person name="Waligorski J.E."/>
            <person name="Wang C."/>
            <person name="Rock S.M."/>
            <person name="Tin-Wollam A.-M."/>
            <person name="Maupin R."/>
            <person name="Latreille P."/>
            <person name="Wendl M.C."/>
            <person name="Yang S.-P."/>
            <person name="Pohl C."/>
            <person name="Wallis J.W."/>
            <person name="Spieth J."/>
            <person name="Bieri T.A."/>
            <person name="Berkowicz N."/>
            <person name="Nelson J.O."/>
            <person name="Osborne J."/>
            <person name="Ding L."/>
            <person name="Meyer R."/>
            <person name="Sabo A."/>
            <person name="Shotland Y."/>
            <person name="Sinha P."/>
            <person name="Wohldmann P.E."/>
            <person name="Cook L.L."/>
            <person name="Hickenbotham M.T."/>
            <person name="Eldred J."/>
            <person name="Williams D."/>
            <person name="Jones T.A."/>
            <person name="She X."/>
            <person name="Ciccarelli F.D."/>
            <person name="Izaurralde E."/>
            <person name="Taylor J."/>
            <person name="Schmutz J."/>
            <person name="Myers R.M."/>
            <person name="Cox D.R."/>
            <person name="Huang X."/>
            <person name="McPherson J.D."/>
            <person name="Mardis E.R."/>
            <person name="Clifton S.W."/>
            <person name="Warren W.C."/>
            <person name="Chinwalla A.T."/>
            <person name="Eddy S.R."/>
            <person name="Marra M.A."/>
            <person name="Ovcharenko I."/>
            <person name="Furey T.S."/>
            <person name="Miller W."/>
            <person name="Eichler E.E."/>
            <person name="Bork P."/>
            <person name="Suyama M."/>
            <person name="Torrents D."/>
            <person name="Waterston R.H."/>
            <person name="Wilson R.K."/>
        </authorList>
    </citation>
    <scope>NUCLEOTIDE SEQUENCE [LARGE SCALE GENOMIC DNA]</scope>
</reference>
<reference key="5">
    <citation type="submission" date="2005-09" db="EMBL/GenBank/DDBJ databases">
        <authorList>
            <person name="Mural R.J."/>
            <person name="Istrail S."/>
            <person name="Sutton G.G."/>
            <person name="Florea L."/>
            <person name="Halpern A.L."/>
            <person name="Mobarry C.M."/>
            <person name="Lippert R."/>
            <person name="Walenz B."/>
            <person name="Shatkay H."/>
            <person name="Dew I."/>
            <person name="Miller J.R."/>
            <person name="Flanigan M.J."/>
            <person name="Edwards N.J."/>
            <person name="Bolanos R."/>
            <person name="Fasulo D."/>
            <person name="Halldorsson B.V."/>
            <person name="Hannenhalli S."/>
            <person name="Turner R."/>
            <person name="Yooseph S."/>
            <person name="Lu F."/>
            <person name="Nusskern D.R."/>
            <person name="Shue B.C."/>
            <person name="Zheng X.H."/>
            <person name="Zhong F."/>
            <person name="Delcher A.L."/>
            <person name="Huson D.H."/>
            <person name="Kravitz S.A."/>
            <person name="Mouchard L."/>
            <person name="Reinert K."/>
            <person name="Remington K.A."/>
            <person name="Clark A.G."/>
            <person name="Waterman M.S."/>
            <person name="Eichler E.E."/>
            <person name="Adams M.D."/>
            <person name="Hunkapiller M.W."/>
            <person name="Myers E.W."/>
            <person name="Venter J.C."/>
        </authorList>
    </citation>
    <scope>NUCLEOTIDE SEQUENCE [LARGE SCALE GENOMIC DNA]</scope>
</reference>
<reference key="6">
    <citation type="journal article" date="2004" name="Genome Res.">
        <title>The status, quality, and expansion of the NIH full-length cDNA project: the Mammalian Gene Collection (MGC).</title>
        <authorList>
            <consortium name="The MGC Project Team"/>
        </authorList>
    </citation>
    <scope>NUCLEOTIDE SEQUENCE [LARGE SCALE MRNA]</scope>
    <source>
        <tissue>Eye</tissue>
    </source>
</reference>
<reference key="7">
    <citation type="journal article" date="2011" name="BMC Syst. Biol.">
        <title>Initial characterization of the human central proteome.</title>
        <authorList>
            <person name="Burkard T.R."/>
            <person name="Planyavsky M."/>
            <person name="Kaupe I."/>
            <person name="Breitwieser F.P."/>
            <person name="Buerckstuemmer T."/>
            <person name="Bennett K.L."/>
            <person name="Superti-Furga G."/>
            <person name="Colinge J."/>
        </authorList>
    </citation>
    <scope>IDENTIFICATION BY MASS SPECTROMETRY [LARGE SCALE ANALYSIS]</scope>
</reference>
<reference key="8">
    <citation type="journal article" date="2013" name="Biochem. Pharmacol.">
        <title>A comprehensive machine-readable view of the mammalian cholesterol biosynthesis pathway.</title>
        <authorList>
            <person name="Mazein A."/>
            <person name="Watterson S."/>
            <person name="Hsieh W.Y."/>
            <person name="Griffiths W.J."/>
            <person name="Ghazal P."/>
        </authorList>
    </citation>
    <scope>FUNCTION</scope>
    <scope>PATHWAY</scope>
</reference>
<reference key="9">
    <citation type="journal article" date="2014" name="J. Proteomics">
        <title>An enzyme assisted RP-RPLC approach for in-depth analysis of human liver phosphoproteome.</title>
        <authorList>
            <person name="Bian Y."/>
            <person name="Song C."/>
            <person name="Cheng K."/>
            <person name="Dong M."/>
            <person name="Wang F."/>
            <person name="Huang J."/>
            <person name="Sun D."/>
            <person name="Wang L."/>
            <person name="Ye M."/>
            <person name="Zou H."/>
        </authorList>
    </citation>
    <scope>IDENTIFICATION BY MASS SPECTROMETRY [LARGE SCALE ANALYSIS]</scope>
    <source>
        <tissue>Liver</tissue>
    </source>
</reference>
<reference key="10">
    <citation type="journal article" date="2015" name="Elife">
        <title>Flux analysis of cholesterol biosynthesis in vivo reveals multiple tissue and cell-type specific pathways.</title>
        <authorList>
            <person name="Mitsche M.A."/>
            <person name="McDonald J.G."/>
            <person name="Hobbs H.H."/>
            <person name="Cohen J.C."/>
        </authorList>
    </citation>
    <scope>FUNCTION</scope>
    <scope>CATALYTIC ACTIVITY</scope>
    <scope>PATHWAY</scope>
</reference>
<reference key="11">
    <citation type="journal article" date="2015" name="Pharmacol. Res. Perspect.">
        <title>Human hepatic metabolism of the anti-osteoporosis drug eldecalcitol involves sterol C4-methyl oxidase.</title>
        <authorList>
            <person name="Yasuda K."/>
            <person name="Iwanaga Y."/>
            <person name="Ogawa K."/>
            <person name="Mano H."/>
            <person name="Ueno S."/>
            <person name="Kimoto S."/>
            <person name="Ohta M."/>
            <person name="Kamakura M."/>
            <person name="Ikushiro S."/>
            <person name="Sakaki T."/>
        </authorList>
    </citation>
    <scope>FUNCTION</scope>
    <scope>CATALYTIC ACTIVITY</scope>
</reference>
<reference key="12">
    <citation type="journal article" date="2017" name="Mol. Genet. Metab.">
        <title>A rare case of sterol-C4-methyl oxidase deficiency in a young Italian male: Biochemical and molecular characterization.</title>
        <authorList>
            <person name="Frisso G."/>
            <person name="Gelzo M."/>
            <person name="Procopio E."/>
            <person name="Sica C."/>
            <person name="Lenza M.P."/>
            <person name="Dello Russo A."/>
            <person name="Donati M.A."/>
            <person name="Salvatore F."/>
            <person name="Corso G."/>
        </authorList>
    </citation>
    <scope>FUNCTION</scope>
    <scope>CATALYTIC ACTIVITY</scope>
    <scope>PATHWAY</scope>
</reference>
<reference key="13">
    <citation type="journal article" date="2023" name="J. Lipid Res.">
        <title>Cholesterol synthesis enzyme SC4MOL is fine-tuned by sterols and targeted for degradation by the E3 ligase MARCHF6.</title>
        <authorList>
            <person name="Qian L."/>
            <person name="Scott N.A."/>
            <person name="Capell-Hattam I.M."/>
            <person name="Draper E.A."/>
            <person name="Fenton N.M."/>
            <person name="Luu W."/>
            <person name="Sharpe L.J."/>
            <person name="Brown A.J."/>
        </authorList>
    </citation>
    <scope>FUNCTION</scope>
    <scope>UBIQUITINATION BY MARCHF6</scope>
</reference>
<reference key="14">
    <citation type="journal article" date="2011" name="J. Clin. Invest.">
        <title>Mutations in the human SC4MOL gene encoding a methyl sterol oxidase cause psoriasiform dermatitis, microcephaly, and developmental delay.</title>
        <authorList>
            <person name="He M."/>
            <person name="Kratz L.E."/>
            <person name="Michel J.J."/>
            <person name="Vallejo A.N."/>
            <person name="Ferris L."/>
            <person name="Kelley R.I."/>
            <person name="Hoover J.J."/>
            <person name="Jukic D."/>
            <person name="Gibson K.M."/>
            <person name="Wolfe L.A."/>
            <person name="Ramachandran D."/>
            <person name="Zwick M.E."/>
            <person name="Vockley J."/>
        </authorList>
    </citation>
    <scope>INVOLVEMENT IN MCCPD</scope>
    <scope>VARIANTS MCCPD GLN-173 AND CYS-244</scope>
    <scope>FUNCTION</scope>
    <scope>CATALYTIC ACTIVITY</scope>
    <scope>PATHWAY</scope>
</reference>
<reference key="15">
    <citation type="journal article" date="2014" name="Biochim. Biophys. Acta">
        <title>The role of sterol-C4-methyl oxidase in epidermal biology.</title>
        <authorList>
            <person name="He M."/>
            <person name="Smith L.D."/>
            <person name="Chang R."/>
            <person name="Li X."/>
            <person name="Vockley J."/>
        </authorList>
    </citation>
    <scope>VARIANT MCCPD ARG-115</scope>
</reference>
<accession>Q15800</accession>
<accession>A8K8Q3</accession>
<accession>A8MYF6</accession>
<accession>D3DP32</accession>
<accession>Q32Q24</accession>
<dbReference type="EC" id="1.14.18.9" evidence="1"/>
<dbReference type="EMBL" id="U60205">
    <property type="protein sequence ID" value="AAC50587.1"/>
    <property type="molecule type" value="mRNA"/>
</dbReference>
<dbReference type="EMBL" id="U93162">
    <property type="protein sequence ID" value="AAB81566.1"/>
    <property type="molecule type" value="mRNA"/>
</dbReference>
<dbReference type="EMBL" id="AK292418">
    <property type="protein sequence ID" value="BAF85107.1"/>
    <property type="molecule type" value="mRNA"/>
</dbReference>
<dbReference type="EMBL" id="AK295432">
    <property type="protein sequence ID" value="BAH12066.1"/>
    <property type="molecule type" value="mRNA"/>
</dbReference>
<dbReference type="EMBL" id="AC012504">
    <property type="status" value="NOT_ANNOTATED_CDS"/>
    <property type="molecule type" value="Genomic_DNA"/>
</dbReference>
<dbReference type="EMBL" id="CH471056">
    <property type="protein sequence ID" value="EAX04820.1"/>
    <property type="molecule type" value="Genomic_DNA"/>
</dbReference>
<dbReference type="EMBL" id="CH471056">
    <property type="protein sequence ID" value="EAX04821.1"/>
    <property type="molecule type" value="Genomic_DNA"/>
</dbReference>
<dbReference type="EMBL" id="BC010653">
    <property type="protein sequence ID" value="AAH10653.1"/>
    <property type="molecule type" value="mRNA"/>
</dbReference>
<dbReference type="EMBL" id="BC107879">
    <property type="protein sequence ID" value="AAI07880.1"/>
    <property type="molecule type" value="mRNA"/>
</dbReference>
<dbReference type="CCDS" id="CCDS3809.1">
    <molecule id="Q15800-1"/>
</dbReference>
<dbReference type="CCDS" id="CCDS43280.1">
    <molecule id="Q15800-2"/>
</dbReference>
<dbReference type="RefSeq" id="NP_001017369.1">
    <molecule id="Q15800-2"/>
    <property type="nucleotide sequence ID" value="NM_001017369.3"/>
</dbReference>
<dbReference type="RefSeq" id="NP_006736.1">
    <molecule id="Q15800-1"/>
    <property type="nucleotide sequence ID" value="NM_006745.5"/>
</dbReference>
<dbReference type="RefSeq" id="XP_005263233.1">
    <molecule id="Q15800-1"/>
    <property type="nucleotide sequence ID" value="XM_005263176.3"/>
</dbReference>
<dbReference type="RefSeq" id="XP_054206679.1">
    <molecule id="Q15800-1"/>
    <property type="nucleotide sequence ID" value="XM_054350704.1"/>
</dbReference>
<dbReference type="BioGRID" id="112214">
    <property type="interactions" value="110"/>
</dbReference>
<dbReference type="FunCoup" id="Q15800">
    <property type="interactions" value="806"/>
</dbReference>
<dbReference type="IntAct" id="Q15800">
    <property type="interactions" value="70"/>
</dbReference>
<dbReference type="MINT" id="Q15800"/>
<dbReference type="STRING" id="9606.ENSP00000261507"/>
<dbReference type="DrugBank" id="DB00157">
    <property type="generic name" value="NADH"/>
</dbReference>
<dbReference type="SwissLipids" id="SLP:000001244"/>
<dbReference type="GlyGen" id="Q15800">
    <property type="glycosylation" value="2 sites, 1 N-linked glycan (1 site)"/>
</dbReference>
<dbReference type="iPTMnet" id="Q15800"/>
<dbReference type="PhosphoSitePlus" id="Q15800"/>
<dbReference type="SwissPalm" id="Q15800"/>
<dbReference type="BioMuta" id="MSMO1"/>
<dbReference type="DMDM" id="2498340"/>
<dbReference type="jPOST" id="Q15800"/>
<dbReference type="MassIVE" id="Q15800"/>
<dbReference type="PaxDb" id="9606-ENSP00000261507"/>
<dbReference type="PeptideAtlas" id="Q15800"/>
<dbReference type="ProteomicsDB" id="2398"/>
<dbReference type="ProteomicsDB" id="60767">
    <molecule id="Q15800-1"/>
</dbReference>
<dbReference type="Pumba" id="Q15800"/>
<dbReference type="Antibodypedia" id="28315">
    <property type="antibodies" value="128 antibodies from 20 providers"/>
</dbReference>
<dbReference type="DNASU" id="6307"/>
<dbReference type="Ensembl" id="ENST00000261507.11">
    <molecule id="Q15800-1"/>
    <property type="protein sequence ID" value="ENSP00000261507.6"/>
    <property type="gene ID" value="ENSG00000052802.13"/>
</dbReference>
<dbReference type="Ensembl" id="ENST00000393766.6">
    <molecule id="Q15800-2"/>
    <property type="protein sequence ID" value="ENSP00000377361.2"/>
    <property type="gene ID" value="ENSG00000052802.13"/>
</dbReference>
<dbReference type="GeneID" id="6307"/>
<dbReference type="KEGG" id="hsa:6307"/>
<dbReference type="MANE-Select" id="ENST00000261507.11">
    <property type="protein sequence ID" value="ENSP00000261507.6"/>
    <property type="RefSeq nucleotide sequence ID" value="NM_006745.5"/>
    <property type="RefSeq protein sequence ID" value="NP_006736.1"/>
</dbReference>
<dbReference type="UCSC" id="uc003ire.4">
    <molecule id="Q15800-1"/>
    <property type="organism name" value="human"/>
</dbReference>
<dbReference type="AGR" id="HGNC:10545"/>
<dbReference type="CTD" id="6307"/>
<dbReference type="DisGeNET" id="6307"/>
<dbReference type="GeneCards" id="MSMO1"/>
<dbReference type="HGNC" id="HGNC:10545">
    <property type="gene designation" value="MSMO1"/>
</dbReference>
<dbReference type="HPA" id="ENSG00000052802">
    <property type="expression patterns" value="Tissue enhanced (liver)"/>
</dbReference>
<dbReference type="MalaCards" id="MSMO1"/>
<dbReference type="MIM" id="607545">
    <property type="type" value="gene"/>
</dbReference>
<dbReference type="MIM" id="616834">
    <property type="type" value="phenotype"/>
</dbReference>
<dbReference type="neXtProt" id="NX_Q15800"/>
<dbReference type="OpenTargets" id="ENSG00000052802"/>
<dbReference type="Orphanet" id="488168">
    <property type="disease" value="Microcephaly-congenital cataract-psoriasiform dermatitis syndrome"/>
</dbReference>
<dbReference type="PharmGKB" id="PA34955"/>
<dbReference type="VEuPathDB" id="HostDB:ENSG00000052802"/>
<dbReference type="eggNOG" id="KOG0873">
    <property type="taxonomic scope" value="Eukaryota"/>
</dbReference>
<dbReference type="GeneTree" id="ENSGT00940000158012"/>
<dbReference type="HOGENOM" id="CLU_047036_5_3_1"/>
<dbReference type="InParanoid" id="Q15800"/>
<dbReference type="OMA" id="IVHEFIY"/>
<dbReference type="OrthoDB" id="1658724at2759"/>
<dbReference type="PAN-GO" id="Q15800">
    <property type="GO annotations" value="3 GO annotations based on evolutionary models"/>
</dbReference>
<dbReference type="PhylomeDB" id="Q15800"/>
<dbReference type="TreeFam" id="TF354294"/>
<dbReference type="BioCyc" id="MetaCyc:HS00650-MONOMER"/>
<dbReference type="BRENDA" id="1.14.18.9">
    <property type="organism ID" value="2681"/>
</dbReference>
<dbReference type="PathwayCommons" id="Q15800"/>
<dbReference type="Reactome" id="R-HSA-191273">
    <property type="pathway name" value="Cholesterol biosynthesis"/>
</dbReference>
<dbReference type="SignaLink" id="Q15800"/>
<dbReference type="UniPathway" id="UPA00063"/>
<dbReference type="UniPathway" id="UPA00770">
    <property type="reaction ID" value="UER00756"/>
</dbReference>
<dbReference type="BioGRID-ORCS" id="6307">
    <property type="hits" value="31 hits in 1159 CRISPR screens"/>
</dbReference>
<dbReference type="ChiTaRS" id="MSMO1">
    <property type="organism name" value="human"/>
</dbReference>
<dbReference type="GenomeRNAi" id="6307"/>
<dbReference type="Pharos" id="Q15800">
    <property type="development level" value="Tbio"/>
</dbReference>
<dbReference type="PRO" id="PR:Q15800"/>
<dbReference type="Proteomes" id="UP000005640">
    <property type="component" value="Chromosome 4"/>
</dbReference>
<dbReference type="RNAct" id="Q15800">
    <property type="molecule type" value="protein"/>
</dbReference>
<dbReference type="Bgee" id="ENSG00000052802">
    <property type="expression patterns" value="Expressed in adrenal tissue and 213 other cell types or tissues"/>
</dbReference>
<dbReference type="ExpressionAtlas" id="Q15800">
    <property type="expression patterns" value="baseline and differential"/>
</dbReference>
<dbReference type="GO" id="GO:0005783">
    <property type="term" value="C:endoplasmic reticulum"/>
    <property type="evidence" value="ECO:0000304"/>
    <property type="project" value="ProtInc"/>
</dbReference>
<dbReference type="GO" id="GO:0005789">
    <property type="term" value="C:endoplasmic reticulum membrane"/>
    <property type="evidence" value="ECO:0000318"/>
    <property type="project" value="GO_Central"/>
</dbReference>
<dbReference type="GO" id="GO:0016020">
    <property type="term" value="C:membrane"/>
    <property type="evidence" value="ECO:0000304"/>
    <property type="project" value="ProtInc"/>
</dbReference>
<dbReference type="GO" id="GO:0005886">
    <property type="term" value="C:plasma membrane"/>
    <property type="evidence" value="ECO:0000304"/>
    <property type="project" value="ProtInc"/>
</dbReference>
<dbReference type="GO" id="GO:0000254">
    <property type="term" value="F:C-4 methylsterol oxidase activity"/>
    <property type="evidence" value="ECO:0000318"/>
    <property type="project" value="GO_Central"/>
</dbReference>
<dbReference type="GO" id="GO:0005506">
    <property type="term" value="F:iron ion binding"/>
    <property type="evidence" value="ECO:0007669"/>
    <property type="project" value="InterPro"/>
</dbReference>
<dbReference type="GO" id="GO:0006695">
    <property type="term" value="P:cholesterol biosynthetic process"/>
    <property type="evidence" value="ECO:0000304"/>
    <property type="project" value="Reactome"/>
</dbReference>
<dbReference type="GO" id="GO:0006631">
    <property type="term" value="P:fatty acid metabolic process"/>
    <property type="evidence" value="ECO:0000304"/>
    <property type="project" value="ProtInc"/>
</dbReference>
<dbReference type="GO" id="GO:0008202">
    <property type="term" value="P:steroid metabolic process"/>
    <property type="evidence" value="ECO:0000304"/>
    <property type="project" value="ProtInc"/>
</dbReference>
<dbReference type="GO" id="GO:0016126">
    <property type="term" value="P:sterol biosynthetic process"/>
    <property type="evidence" value="ECO:0000318"/>
    <property type="project" value="GO_Central"/>
</dbReference>
<dbReference type="InterPro" id="IPR006694">
    <property type="entry name" value="Fatty_acid_hydroxylase"/>
</dbReference>
<dbReference type="InterPro" id="IPR050307">
    <property type="entry name" value="Sterol_Desaturase_Related"/>
</dbReference>
<dbReference type="PANTHER" id="PTHR11863">
    <property type="entry name" value="STEROL DESATURASE"/>
    <property type="match status" value="1"/>
</dbReference>
<dbReference type="Pfam" id="PF04116">
    <property type="entry name" value="FA_hydroxylase"/>
    <property type="match status" value="1"/>
</dbReference>
<feature type="chain" id="PRO_0000117033" description="Methylsterol monooxygenase 1">
    <location>
        <begin position="1"/>
        <end position="293"/>
    </location>
</feature>
<feature type="transmembrane region" description="Helical" evidence="2">
    <location>
        <begin position="55"/>
        <end position="75"/>
    </location>
</feature>
<feature type="transmembrane region" description="Helical" evidence="2">
    <location>
        <begin position="100"/>
        <end position="120"/>
    </location>
</feature>
<feature type="transmembrane region" description="Helical" evidence="2">
    <location>
        <begin position="199"/>
        <end position="219"/>
    </location>
</feature>
<feature type="domain" description="Fatty acid hydroxylase" evidence="2">
    <location>
        <begin position="145"/>
        <end position="274"/>
    </location>
</feature>
<feature type="short sequence motif" description="Histidine box-1">
    <location>
        <begin position="157"/>
        <end position="161"/>
    </location>
</feature>
<feature type="short sequence motif" description="Histidine box-2">
    <location>
        <begin position="170"/>
        <end position="174"/>
    </location>
</feature>
<feature type="short sequence motif" description="Histidine box-3">
    <location>
        <begin position="249"/>
        <end position="255"/>
    </location>
</feature>
<feature type="splice variant" id="VSP_044585" description="In isoform 2." evidence="8">
    <location>
        <begin position="1"/>
        <end position="131"/>
    </location>
</feature>
<feature type="sequence variant" id="VAR_076531" description="In MCCPD; uncertain significance; dbSNP:rs1310714454." evidence="4">
    <original>G</original>
    <variation>R</variation>
    <location>
        <position position="115"/>
    </location>
</feature>
<feature type="sequence variant" id="VAR_048898" description="In dbSNP:rs34499452.">
    <original>N</original>
    <variation>S</variation>
    <location>
        <position position="124"/>
    </location>
</feature>
<feature type="sequence variant" id="VAR_076532" description="In MCCPD; dbSNP:rs869025576." evidence="3">
    <original>H</original>
    <variation>Q</variation>
    <location>
        <position position="173"/>
    </location>
</feature>
<feature type="sequence variant" id="VAR_076533" description="In MCCPD; dbSNP:rs760048191." evidence="3">
    <original>Y</original>
    <variation>C</variation>
    <location>
        <position position="244"/>
    </location>
</feature>
<name>MSMO1_HUMAN</name>
<gene>
    <name type="primary">MSMO1</name>
    <name type="synonym">DESP4</name>
    <name type="synonym">ERG25</name>
    <name type="synonym">SC4MOL</name>
</gene>
<sequence length="293" mass="35216">MATNESVSIFSSASLAVEYVDSLLPENPLQEPFKNAWNYMLNNYTKFQIATWGSLIVHEALYFLFCLPGFLFQFIPYMKKYKIQKDKPETWENQWKCFKVLLFNHFCIQLPLICGTYYFTEYFNIPYDWERMPRWYFLLARCFGCAVIEDTWHYFLHRLLHHKRIYKYIHKVHHEFQAPFGMEAEYAHPLETLILGTGFFIGIVLLCDHVILLWAWVTIRLLETIDVHSGYDIPLNPLNLIPFYAGSRHHDFHHMNFIGNYASTFTWWDRIFGTDSQYNAYNEKRKKFEKKTE</sequence>
<keyword id="KW-0025">Alternative splicing</keyword>
<keyword id="KW-0898">Cataract</keyword>
<keyword id="KW-0152">Cholesterol biosynthesis</keyword>
<keyword id="KW-0153">Cholesterol metabolism</keyword>
<keyword id="KW-0225">Disease variant</keyword>
<keyword id="KW-0256">Endoplasmic reticulum</keyword>
<keyword id="KW-0408">Iron</keyword>
<keyword id="KW-0444">Lipid biosynthesis</keyword>
<keyword id="KW-0443">Lipid metabolism</keyword>
<keyword id="KW-0472">Membrane</keyword>
<keyword id="KW-0520">NAD</keyword>
<keyword id="KW-0560">Oxidoreductase</keyword>
<keyword id="KW-1267">Proteomics identification</keyword>
<keyword id="KW-1185">Reference proteome</keyword>
<keyword id="KW-0752">Steroid biosynthesis</keyword>
<keyword id="KW-0753">Steroid metabolism</keyword>
<keyword id="KW-0756">Sterol biosynthesis</keyword>
<keyword id="KW-1207">Sterol metabolism</keyword>
<keyword id="KW-0812">Transmembrane</keyword>
<keyword id="KW-1133">Transmembrane helix</keyword>
<keyword id="KW-0832">Ubl conjugation</keyword>
<proteinExistence type="evidence at protein level"/>